<accession>Q4ZQC6</accession>
<dbReference type="EC" id="1.8.4.12" evidence="1"/>
<dbReference type="EMBL" id="CP000075">
    <property type="protein sequence ID" value="AAY38646.1"/>
    <property type="molecule type" value="Genomic_DNA"/>
</dbReference>
<dbReference type="RefSeq" id="WP_011268546.1">
    <property type="nucleotide sequence ID" value="NC_007005.1"/>
</dbReference>
<dbReference type="RefSeq" id="YP_236684.1">
    <property type="nucleotide sequence ID" value="NC_007005.1"/>
</dbReference>
<dbReference type="SMR" id="Q4ZQC6"/>
<dbReference type="STRING" id="205918.Psyr_3614"/>
<dbReference type="KEGG" id="psb:Psyr_3614"/>
<dbReference type="PATRIC" id="fig|205918.7.peg.3710"/>
<dbReference type="eggNOG" id="COG0229">
    <property type="taxonomic scope" value="Bacteria"/>
</dbReference>
<dbReference type="HOGENOM" id="CLU_031040_8_5_6"/>
<dbReference type="OrthoDB" id="9785497at2"/>
<dbReference type="Proteomes" id="UP000000426">
    <property type="component" value="Chromosome"/>
</dbReference>
<dbReference type="GO" id="GO:0005737">
    <property type="term" value="C:cytoplasm"/>
    <property type="evidence" value="ECO:0007669"/>
    <property type="project" value="TreeGrafter"/>
</dbReference>
<dbReference type="GO" id="GO:0033743">
    <property type="term" value="F:peptide-methionine (R)-S-oxide reductase activity"/>
    <property type="evidence" value="ECO:0007669"/>
    <property type="project" value="UniProtKB-UniRule"/>
</dbReference>
<dbReference type="GO" id="GO:0008270">
    <property type="term" value="F:zinc ion binding"/>
    <property type="evidence" value="ECO:0007669"/>
    <property type="project" value="UniProtKB-UniRule"/>
</dbReference>
<dbReference type="GO" id="GO:0030091">
    <property type="term" value="P:protein repair"/>
    <property type="evidence" value="ECO:0007669"/>
    <property type="project" value="InterPro"/>
</dbReference>
<dbReference type="GO" id="GO:0006979">
    <property type="term" value="P:response to oxidative stress"/>
    <property type="evidence" value="ECO:0007669"/>
    <property type="project" value="InterPro"/>
</dbReference>
<dbReference type="FunFam" id="2.170.150.20:FF:000001">
    <property type="entry name" value="Peptide methionine sulfoxide reductase MsrB"/>
    <property type="match status" value="1"/>
</dbReference>
<dbReference type="Gene3D" id="2.170.150.20">
    <property type="entry name" value="Peptide methionine sulfoxide reductase"/>
    <property type="match status" value="1"/>
</dbReference>
<dbReference type="HAMAP" id="MF_01400">
    <property type="entry name" value="MsrB"/>
    <property type="match status" value="1"/>
</dbReference>
<dbReference type="InterPro" id="IPR028427">
    <property type="entry name" value="Met_Sox_Rdtase_MsrB"/>
</dbReference>
<dbReference type="InterPro" id="IPR002579">
    <property type="entry name" value="Met_Sox_Rdtase_MsrB_dom"/>
</dbReference>
<dbReference type="InterPro" id="IPR011057">
    <property type="entry name" value="Mss4-like_sf"/>
</dbReference>
<dbReference type="NCBIfam" id="TIGR00357">
    <property type="entry name" value="peptide-methionine (R)-S-oxide reductase MsrB"/>
    <property type="match status" value="1"/>
</dbReference>
<dbReference type="PANTHER" id="PTHR10173">
    <property type="entry name" value="METHIONINE SULFOXIDE REDUCTASE"/>
    <property type="match status" value="1"/>
</dbReference>
<dbReference type="PANTHER" id="PTHR10173:SF52">
    <property type="entry name" value="METHIONINE-R-SULFOXIDE REDUCTASE B1"/>
    <property type="match status" value="1"/>
</dbReference>
<dbReference type="Pfam" id="PF01641">
    <property type="entry name" value="SelR"/>
    <property type="match status" value="1"/>
</dbReference>
<dbReference type="SUPFAM" id="SSF51316">
    <property type="entry name" value="Mss4-like"/>
    <property type="match status" value="1"/>
</dbReference>
<dbReference type="PROSITE" id="PS51790">
    <property type="entry name" value="MSRB"/>
    <property type="match status" value="1"/>
</dbReference>
<gene>
    <name evidence="1" type="primary">msrB</name>
    <name type="ordered locus">Psyr_3614</name>
</gene>
<name>MSRB_PSEU2</name>
<proteinExistence type="inferred from homology"/>
<organism>
    <name type="scientific">Pseudomonas syringae pv. syringae (strain B728a)</name>
    <dbReference type="NCBI Taxonomy" id="205918"/>
    <lineage>
        <taxon>Bacteria</taxon>
        <taxon>Pseudomonadati</taxon>
        <taxon>Pseudomonadota</taxon>
        <taxon>Gammaproteobacteria</taxon>
        <taxon>Pseudomonadales</taxon>
        <taxon>Pseudomonadaceae</taxon>
        <taxon>Pseudomonas</taxon>
        <taxon>Pseudomonas syringae</taxon>
    </lineage>
</organism>
<sequence length="131" mass="14823">MDKLQKTLEEWKQMLDPEQYNVCRLKGTERPFSGKYDKVKTDGIYHCICCDEPLFDSTTKFDSGCGWPSFYAPLENSAVIEVRDMSHGMIRTEVVCAKCDAHLGHVFPDGPPPTGLRYCINSVCLDLVPRS</sequence>
<comment type="catalytic activity">
    <reaction evidence="1">
        <text>L-methionyl-[protein] + [thioredoxin]-disulfide + H2O = L-methionyl-(R)-S-oxide-[protein] + [thioredoxin]-dithiol</text>
        <dbReference type="Rhea" id="RHEA:24164"/>
        <dbReference type="Rhea" id="RHEA-COMP:10698"/>
        <dbReference type="Rhea" id="RHEA-COMP:10700"/>
        <dbReference type="Rhea" id="RHEA-COMP:12313"/>
        <dbReference type="Rhea" id="RHEA-COMP:12314"/>
        <dbReference type="ChEBI" id="CHEBI:15377"/>
        <dbReference type="ChEBI" id="CHEBI:16044"/>
        <dbReference type="ChEBI" id="CHEBI:29950"/>
        <dbReference type="ChEBI" id="CHEBI:45764"/>
        <dbReference type="ChEBI" id="CHEBI:50058"/>
        <dbReference type="EC" id="1.8.4.12"/>
    </reaction>
</comment>
<comment type="cofactor">
    <cofactor evidence="1">
        <name>Zn(2+)</name>
        <dbReference type="ChEBI" id="CHEBI:29105"/>
    </cofactor>
    <text evidence="1">Binds 1 zinc ion per subunit. The zinc ion is important for the structural integrity of the protein.</text>
</comment>
<comment type="similarity">
    <text evidence="1">Belongs to the MsrB Met sulfoxide reductase family.</text>
</comment>
<feature type="chain" id="PRO_1000068289" description="Peptide methionine sulfoxide reductase MsrB">
    <location>
        <begin position="1"/>
        <end position="131"/>
    </location>
</feature>
<feature type="domain" description="MsrB" evidence="2">
    <location>
        <begin position="8"/>
        <end position="130"/>
    </location>
</feature>
<feature type="active site" description="Nucleophile" evidence="2">
    <location>
        <position position="119"/>
    </location>
</feature>
<feature type="binding site" evidence="2">
    <location>
        <position position="47"/>
    </location>
    <ligand>
        <name>Zn(2+)</name>
        <dbReference type="ChEBI" id="CHEBI:29105"/>
    </ligand>
</feature>
<feature type="binding site" evidence="2">
    <location>
        <position position="50"/>
    </location>
    <ligand>
        <name>Zn(2+)</name>
        <dbReference type="ChEBI" id="CHEBI:29105"/>
    </ligand>
</feature>
<feature type="binding site" evidence="2">
    <location>
        <position position="96"/>
    </location>
    <ligand>
        <name>Zn(2+)</name>
        <dbReference type="ChEBI" id="CHEBI:29105"/>
    </ligand>
</feature>
<feature type="binding site" evidence="2">
    <location>
        <position position="99"/>
    </location>
    <ligand>
        <name>Zn(2+)</name>
        <dbReference type="ChEBI" id="CHEBI:29105"/>
    </ligand>
</feature>
<keyword id="KW-0479">Metal-binding</keyword>
<keyword id="KW-0560">Oxidoreductase</keyword>
<keyword id="KW-0862">Zinc</keyword>
<reference key="1">
    <citation type="journal article" date="2005" name="Proc. Natl. Acad. Sci. U.S.A.">
        <title>Comparison of the complete genome sequences of Pseudomonas syringae pv. syringae B728a and pv. tomato DC3000.</title>
        <authorList>
            <person name="Feil H."/>
            <person name="Feil W.S."/>
            <person name="Chain P."/>
            <person name="Larimer F."/>
            <person name="Dibartolo G."/>
            <person name="Copeland A."/>
            <person name="Lykidis A."/>
            <person name="Trong S."/>
            <person name="Nolan M."/>
            <person name="Goltsman E."/>
            <person name="Thiel J."/>
            <person name="Malfatti S."/>
            <person name="Loper J.E."/>
            <person name="Lapidus A."/>
            <person name="Detter J.C."/>
            <person name="Land M."/>
            <person name="Richardson P.M."/>
            <person name="Kyrpides N.C."/>
            <person name="Ivanova N."/>
            <person name="Lindow S.E."/>
        </authorList>
    </citation>
    <scope>NUCLEOTIDE SEQUENCE [LARGE SCALE GENOMIC DNA]</scope>
    <source>
        <strain>B728a</strain>
    </source>
</reference>
<evidence type="ECO:0000255" key="1">
    <source>
        <dbReference type="HAMAP-Rule" id="MF_01400"/>
    </source>
</evidence>
<evidence type="ECO:0000255" key="2">
    <source>
        <dbReference type="PROSITE-ProRule" id="PRU01126"/>
    </source>
</evidence>
<protein>
    <recommendedName>
        <fullName evidence="1">Peptide methionine sulfoxide reductase MsrB</fullName>
        <ecNumber evidence="1">1.8.4.12</ecNumber>
    </recommendedName>
    <alternativeName>
        <fullName evidence="1">Peptide-methionine (R)-S-oxide reductase</fullName>
    </alternativeName>
</protein>